<protein>
    <recommendedName>
        <fullName>DNA polymerase II large subunit</fullName>
        <shortName>Pol II</shortName>
        <ecNumber evidence="2">2.7.7.7</ecNumber>
    </recommendedName>
    <alternativeName>
        <fullName evidence="2">Exodeoxyribonuclease large subunit</fullName>
        <ecNumber evidence="2">3.1.11.1</ecNumber>
    </alternativeName>
</protein>
<keyword id="KW-0235">DNA replication</keyword>
<keyword id="KW-0238">DNA-binding</keyword>
<keyword id="KW-0239">DNA-directed DNA polymerase</keyword>
<keyword id="KW-0269">Exonuclease</keyword>
<keyword id="KW-0378">Hydrolase</keyword>
<keyword id="KW-0511">Multifunctional enzyme</keyword>
<keyword id="KW-0540">Nuclease</keyword>
<keyword id="KW-0548">Nucleotidyltransferase</keyword>
<keyword id="KW-1185">Reference proteome</keyword>
<keyword id="KW-0808">Transferase</keyword>
<reference key="1">
    <citation type="journal article" date="2000" name="Nature">
        <title>The genome sequence of the thermoacidophilic scavenger Thermoplasma acidophilum.</title>
        <authorList>
            <person name="Ruepp A."/>
            <person name="Graml W."/>
            <person name="Santos-Martinez M.-L."/>
            <person name="Koretke K.K."/>
            <person name="Volker C."/>
            <person name="Mewes H.-W."/>
            <person name="Frishman D."/>
            <person name="Stocker S."/>
            <person name="Lupas A.N."/>
            <person name="Baumeister W."/>
        </authorList>
    </citation>
    <scope>NUCLEOTIDE SEQUENCE [LARGE SCALE GENOMIC DNA]</scope>
    <source>
        <strain>ATCC 25905 / DSM 1728 / JCM 9062 / NBRC 15155 / AMRC-C165</strain>
    </source>
</reference>
<dbReference type="EC" id="2.7.7.7" evidence="2"/>
<dbReference type="EC" id="3.1.11.1" evidence="2"/>
<dbReference type="EMBL" id="AL445063">
    <property type="protein sequence ID" value="CAC11185.1"/>
    <property type="molecule type" value="Genomic_DNA"/>
</dbReference>
<dbReference type="SMR" id="Q9HM33"/>
<dbReference type="STRING" id="273075.gene:9571252"/>
<dbReference type="PaxDb" id="273075-Ta0036m"/>
<dbReference type="EnsemblBacteria" id="CAC11185">
    <property type="protein sequence ID" value="CAC11185"/>
    <property type="gene ID" value="CAC11185"/>
</dbReference>
<dbReference type="KEGG" id="tac:Ta0036"/>
<dbReference type="eggNOG" id="arCOG04447">
    <property type="taxonomic scope" value="Archaea"/>
</dbReference>
<dbReference type="HOGENOM" id="CLU_001154_0_0_2"/>
<dbReference type="InParanoid" id="Q9HM33"/>
<dbReference type="Proteomes" id="UP000001024">
    <property type="component" value="Chromosome"/>
</dbReference>
<dbReference type="GO" id="GO:0003677">
    <property type="term" value="F:DNA binding"/>
    <property type="evidence" value="ECO:0007669"/>
    <property type="project" value="UniProtKB-UniRule"/>
</dbReference>
<dbReference type="GO" id="GO:0003887">
    <property type="term" value="F:DNA-directed DNA polymerase activity"/>
    <property type="evidence" value="ECO:0007669"/>
    <property type="project" value="UniProtKB-UniRule"/>
</dbReference>
<dbReference type="GO" id="GO:0008310">
    <property type="term" value="F:single-stranded DNA 3'-5' DNA exonuclease activity"/>
    <property type="evidence" value="ECO:0007669"/>
    <property type="project" value="UniProtKB-EC"/>
</dbReference>
<dbReference type="GO" id="GO:0006308">
    <property type="term" value="P:DNA catabolic process"/>
    <property type="evidence" value="ECO:0007669"/>
    <property type="project" value="UniProtKB-UniRule"/>
</dbReference>
<dbReference type="GO" id="GO:0006261">
    <property type="term" value="P:DNA-templated DNA replication"/>
    <property type="evidence" value="ECO:0007669"/>
    <property type="project" value="UniProtKB-UniRule"/>
</dbReference>
<dbReference type="HAMAP" id="MF_00324">
    <property type="entry name" value="DNApol_II_L_arch"/>
    <property type="match status" value="1"/>
</dbReference>
<dbReference type="InterPro" id="IPR004475">
    <property type="entry name" value="PolC_DP2"/>
</dbReference>
<dbReference type="InterPro" id="IPR056172">
    <property type="entry name" value="PolC_DP2_cat_dom"/>
</dbReference>
<dbReference type="InterPro" id="IPR056171">
    <property type="entry name" value="PolC_DP2_central_dom"/>
</dbReference>
<dbReference type="InterPro" id="IPR016033">
    <property type="entry name" value="PolC_DP2_N"/>
</dbReference>
<dbReference type="NCBIfam" id="TIGR00354">
    <property type="entry name" value="polC"/>
    <property type="match status" value="1"/>
</dbReference>
<dbReference type="NCBIfam" id="NF003103">
    <property type="entry name" value="PRK04023.1"/>
    <property type="match status" value="1"/>
</dbReference>
<dbReference type="PANTHER" id="PTHR42210">
    <property type="entry name" value="DNA POLYMERASE II LARGE SUBUNIT"/>
    <property type="match status" value="1"/>
</dbReference>
<dbReference type="PANTHER" id="PTHR42210:SF1">
    <property type="entry name" value="DNA POLYMERASE II LARGE SUBUNIT"/>
    <property type="match status" value="1"/>
</dbReference>
<dbReference type="Pfam" id="PF24846">
    <property type="entry name" value="PolC_DP2_cat"/>
    <property type="match status" value="1"/>
</dbReference>
<dbReference type="Pfam" id="PF24844">
    <property type="entry name" value="PolC_DP2_central"/>
    <property type="match status" value="1"/>
</dbReference>
<dbReference type="Pfam" id="PF03833">
    <property type="entry name" value="PolC_DP2_N"/>
    <property type="match status" value="1"/>
</dbReference>
<dbReference type="PIRSF" id="PIRSF016275">
    <property type="entry name" value="PolC_DP2"/>
    <property type="match status" value="1"/>
</dbReference>
<organism>
    <name type="scientific">Thermoplasma acidophilum (strain ATCC 25905 / DSM 1728 / JCM 9062 / NBRC 15155 / AMRC-C165)</name>
    <dbReference type="NCBI Taxonomy" id="273075"/>
    <lineage>
        <taxon>Archaea</taxon>
        <taxon>Methanobacteriati</taxon>
        <taxon>Thermoplasmatota</taxon>
        <taxon>Thermoplasmata</taxon>
        <taxon>Thermoplasmatales</taxon>
        <taxon>Thermoplasmataceae</taxon>
        <taxon>Thermoplasma</taxon>
    </lineage>
</organism>
<gene>
    <name type="primary">polC</name>
    <name type="ordered locus">Ta0036</name>
</gene>
<feature type="chain" id="PRO_0000152580" description="DNA polymerase II large subunit">
    <location>
        <begin position="1"/>
        <end position="1087"/>
    </location>
</feature>
<proteinExistence type="inferred from homology"/>
<evidence type="ECO:0000250" key="1"/>
<evidence type="ECO:0000255" key="2">
    <source>
        <dbReference type="HAMAP-Rule" id="MF_00324"/>
    </source>
</evidence>
<evidence type="ECO:0000305" key="3"/>
<accession>Q9HM33</accession>
<name>DP2L_THEAC</name>
<sequence length="1087" mass="122284">MIMSQKPFDLEGYRKYITEKVREAFNVAQEARAKGLDVSDHVEIPLASDMAERIEALIGIKGIAQEIRDLSSRMSREEVSLEMSRRIAAMFKDNRKEALDKAIRVGLAILTEGILVAPLEGIADVYIGKNQDGSEYVGISYAGPIRGAGGTAQALSVLIGDVVRRELGISRFQPTEDEIERYIEEIESYDRIKHLQYMPTPDEIKLVVRNSPICIDGEGSEEEEVSGHRDMERIKTNRIRGGMCLVLCEGLVQKARKILKYTSSMHLDDWNFLANLGGKAEGKSSKKSDKFLKDIVAGRPVFSHPSRPGGFRLRYGRSRVSGLAAASLNPATMYIMGKFIAIGSQIKVELPGKAAAVTPCDTIDGPTVLLKNGDHVKINDIEKAREVYDDVVEITDAGEILIAYGDFLENNYPLPTPSFTVEWWEQYLPDGVNAKDIDQFSAVEISRKYGIPLHPYYDYYWHDISFEDLEFLVKNAEQWSITEDGMRVPYPAFDVFIRLGIEFRRSGDYLIIRDYYPLLISLGYDVRNGKIVNVKKYERKGSVMETVNYLSGLIIKPRAPTRVGSRLGRPEKAGDRKMKPMVHSLFPVESYGEARRSIIGANKNSEGSYKAEVFFYRCNSCGFETPTPVCPRCGGHCSPLGEKTGSIDLESILNRAESILGISLDSLKEFKGVKKLMSKEKVAEPIEKGILRAVHDISVNKDGTCRFDMSDIPITHFRYREIGIDERTLADLGYEVRDVNELFPQDVIIPRKAAKYLFNVSRFIDDLLVKYYNMPPFYSLESEEDLIGHLIIGLAPHTSGGVVGRIIGFSDVNAFYAHPFFHAAKRRNCDGDEDSVMLLMDGFLNFSARYLPSTRGGLMDAPLVLSVLINPDEIDKEALNVDTLSRYPVLFYEAAERHASPAEIEDTMMTMKVRIKKTGTYMGSSYTMDTSDINSGVLVSSYKTLGTMDEKINEQLGLAKKLRAVDADDVAARVISTHFLPDMYGNFRKFFSQEFRCTKCNAKYRRIPLSGRCQKCGSTSLTLTIHKGSVVKYLNETLKIAENYRLPDYLKARIDNLARTIKETFPDTEEEEKPEPREVKITGLDMY</sequence>
<comment type="function">
    <text evidence="1">Possesses two activities: a DNA synthesis (polymerase) and an exonucleolytic activity that degrades single-stranded DNA in the 3'- to 5'-direction. Has a template-primer preference which is characteristic of a replicative DNA polymerase (By similarity).</text>
</comment>
<comment type="catalytic activity">
    <reaction>
        <text>DNA(n) + a 2'-deoxyribonucleoside 5'-triphosphate = DNA(n+1) + diphosphate</text>
        <dbReference type="Rhea" id="RHEA:22508"/>
        <dbReference type="Rhea" id="RHEA-COMP:17339"/>
        <dbReference type="Rhea" id="RHEA-COMP:17340"/>
        <dbReference type="ChEBI" id="CHEBI:33019"/>
        <dbReference type="ChEBI" id="CHEBI:61560"/>
        <dbReference type="ChEBI" id="CHEBI:173112"/>
        <dbReference type="EC" id="2.7.7.7"/>
    </reaction>
</comment>
<comment type="catalytic activity">
    <reaction evidence="2">
        <text>Exonucleolytic cleavage in the 3'- to 5'-direction to yield nucleoside 5'-phosphates.</text>
        <dbReference type="EC" id="3.1.11.1"/>
    </reaction>
</comment>
<comment type="subunit">
    <text evidence="1">Heterodimer of a large subunit and a small subunit.</text>
</comment>
<comment type="similarity">
    <text evidence="3">Belongs to the archaeal DNA polymerase II family.</text>
</comment>